<sequence length="103" mass="11870">MITKDKIRVRLFSFDVKILDQSAESIVRAVQKSKTQIKGPIPLPTKIKKYTVLRSPHVNKKSREQFEMRTHKRLIDILEPTSALMDSLMKLELPAGVEVDIKQ</sequence>
<comment type="function">
    <text evidence="1">Involved in the binding of tRNA to the ribosomes.</text>
</comment>
<comment type="subunit">
    <text evidence="1">Part of the 30S ribosomal subunit.</text>
</comment>
<comment type="similarity">
    <text evidence="1">Belongs to the universal ribosomal protein uS10 family.</text>
</comment>
<feature type="chain" id="PRO_1000127087" description="Small ribosomal subunit protein uS10">
    <location>
        <begin position="1"/>
        <end position="103"/>
    </location>
</feature>
<protein>
    <recommendedName>
        <fullName evidence="1">Small ribosomal subunit protein uS10</fullName>
    </recommendedName>
    <alternativeName>
        <fullName evidence="2">30S ribosomal protein S10</fullName>
    </alternativeName>
</protein>
<accession>B5RPI1</accession>
<proteinExistence type="inferred from homology"/>
<name>RS10_BORRA</name>
<organism>
    <name type="scientific">Borrelia recurrentis (strain A1)</name>
    <dbReference type="NCBI Taxonomy" id="412418"/>
    <lineage>
        <taxon>Bacteria</taxon>
        <taxon>Pseudomonadati</taxon>
        <taxon>Spirochaetota</taxon>
        <taxon>Spirochaetia</taxon>
        <taxon>Spirochaetales</taxon>
        <taxon>Borreliaceae</taxon>
        <taxon>Borrelia</taxon>
    </lineage>
</organism>
<dbReference type="EMBL" id="CP000993">
    <property type="protein sequence ID" value="ACH94715.1"/>
    <property type="molecule type" value="Genomic_DNA"/>
</dbReference>
<dbReference type="RefSeq" id="WP_012538931.1">
    <property type="nucleotide sequence ID" value="NC_011244.1"/>
</dbReference>
<dbReference type="SMR" id="B5RPI1"/>
<dbReference type="KEGG" id="bre:BRE_483"/>
<dbReference type="HOGENOM" id="CLU_122625_1_3_12"/>
<dbReference type="Proteomes" id="UP000000612">
    <property type="component" value="Chromosome"/>
</dbReference>
<dbReference type="GO" id="GO:1990904">
    <property type="term" value="C:ribonucleoprotein complex"/>
    <property type="evidence" value="ECO:0007669"/>
    <property type="project" value="UniProtKB-KW"/>
</dbReference>
<dbReference type="GO" id="GO:0005840">
    <property type="term" value="C:ribosome"/>
    <property type="evidence" value="ECO:0007669"/>
    <property type="project" value="UniProtKB-KW"/>
</dbReference>
<dbReference type="GO" id="GO:0003735">
    <property type="term" value="F:structural constituent of ribosome"/>
    <property type="evidence" value="ECO:0007669"/>
    <property type="project" value="InterPro"/>
</dbReference>
<dbReference type="GO" id="GO:0000049">
    <property type="term" value="F:tRNA binding"/>
    <property type="evidence" value="ECO:0007669"/>
    <property type="project" value="UniProtKB-UniRule"/>
</dbReference>
<dbReference type="GO" id="GO:0006412">
    <property type="term" value="P:translation"/>
    <property type="evidence" value="ECO:0007669"/>
    <property type="project" value="UniProtKB-UniRule"/>
</dbReference>
<dbReference type="FunFam" id="3.30.70.600:FF:000003">
    <property type="entry name" value="30S ribosomal protein S10"/>
    <property type="match status" value="1"/>
</dbReference>
<dbReference type="Gene3D" id="3.30.70.600">
    <property type="entry name" value="Ribosomal protein S10 domain"/>
    <property type="match status" value="1"/>
</dbReference>
<dbReference type="HAMAP" id="MF_00508">
    <property type="entry name" value="Ribosomal_uS10"/>
    <property type="match status" value="1"/>
</dbReference>
<dbReference type="InterPro" id="IPR001848">
    <property type="entry name" value="Ribosomal_uS10"/>
</dbReference>
<dbReference type="InterPro" id="IPR027486">
    <property type="entry name" value="Ribosomal_uS10_dom"/>
</dbReference>
<dbReference type="InterPro" id="IPR036838">
    <property type="entry name" value="Ribosomal_uS10_dom_sf"/>
</dbReference>
<dbReference type="NCBIfam" id="NF001861">
    <property type="entry name" value="PRK00596.1"/>
    <property type="match status" value="1"/>
</dbReference>
<dbReference type="NCBIfam" id="TIGR01049">
    <property type="entry name" value="rpsJ_bact"/>
    <property type="match status" value="1"/>
</dbReference>
<dbReference type="PANTHER" id="PTHR11700">
    <property type="entry name" value="30S RIBOSOMAL PROTEIN S10 FAMILY MEMBER"/>
    <property type="match status" value="1"/>
</dbReference>
<dbReference type="Pfam" id="PF00338">
    <property type="entry name" value="Ribosomal_S10"/>
    <property type="match status" value="1"/>
</dbReference>
<dbReference type="PRINTS" id="PR00971">
    <property type="entry name" value="RIBOSOMALS10"/>
</dbReference>
<dbReference type="SMART" id="SM01403">
    <property type="entry name" value="Ribosomal_S10"/>
    <property type="match status" value="1"/>
</dbReference>
<dbReference type="SUPFAM" id="SSF54999">
    <property type="entry name" value="Ribosomal protein S10"/>
    <property type="match status" value="1"/>
</dbReference>
<keyword id="KW-0687">Ribonucleoprotein</keyword>
<keyword id="KW-0689">Ribosomal protein</keyword>
<gene>
    <name evidence="1" type="primary">rpsJ</name>
    <name type="ordered locus">BRE_483</name>
</gene>
<reference key="1">
    <citation type="journal article" date="2008" name="PLoS Genet.">
        <title>The genome of Borrelia recurrentis, the agent of deadly louse-borne relapsing fever, is a degraded subset of tick-borne Borrelia duttonii.</title>
        <authorList>
            <person name="Lescot M."/>
            <person name="Audic S."/>
            <person name="Robert C."/>
            <person name="Nguyen T.T."/>
            <person name="Blanc G."/>
            <person name="Cutler S.J."/>
            <person name="Wincker P."/>
            <person name="Couloux A."/>
            <person name="Claverie J.-M."/>
            <person name="Raoult D."/>
            <person name="Drancourt M."/>
        </authorList>
    </citation>
    <scope>NUCLEOTIDE SEQUENCE [LARGE SCALE GENOMIC DNA]</scope>
    <source>
        <strain>A1</strain>
    </source>
</reference>
<evidence type="ECO:0000255" key="1">
    <source>
        <dbReference type="HAMAP-Rule" id="MF_00508"/>
    </source>
</evidence>
<evidence type="ECO:0000305" key="2"/>